<organism>
    <name type="scientific">Mus musculus</name>
    <name type="common">Mouse</name>
    <dbReference type="NCBI Taxonomy" id="10090"/>
    <lineage>
        <taxon>Eukaryota</taxon>
        <taxon>Metazoa</taxon>
        <taxon>Chordata</taxon>
        <taxon>Craniata</taxon>
        <taxon>Vertebrata</taxon>
        <taxon>Euteleostomi</taxon>
        <taxon>Mammalia</taxon>
        <taxon>Eutheria</taxon>
        <taxon>Euarchontoglires</taxon>
        <taxon>Glires</taxon>
        <taxon>Rodentia</taxon>
        <taxon>Myomorpha</taxon>
        <taxon>Muroidea</taxon>
        <taxon>Muridae</taxon>
        <taxon>Murinae</taxon>
        <taxon>Mus</taxon>
        <taxon>Mus</taxon>
    </lineage>
</organism>
<comment type="function">
    <text evidence="1">Involved in calcium homeostasis, growth and proliferation.</text>
</comment>
<comment type="interaction">
    <interactant intactId="EBI-2366446">
        <id>Q8CGZ0</id>
    </interactant>
    <interactant intactId="EBI-744603">
        <id>Q15637</id>
        <label>SF1</label>
    </interactant>
    <organismsDiffer>true</organismsDiffer>
    <experiments>3</experiments>
</comment>
<comment type="subcellular location">
    <subcellularLocation>
        <location evidence="1">Cytoplasm</location>
    </subcellularLocation>
    <subcellularLocation>
        <location evidence="1">Cytoplasm</location>
        <location evidence="1">Perinuclear region</location>
    </subcellularLocation>
    <subcellularLocation>
        <location evidence="1">Endoplasmic reticulum</location>
    </subcellularLocation>
    <text evidence="1">Distributed throughout the cytoplasm and also localizes to the perinuclear region. Colocalizes with ITPR1 (By similarity).</text>
</comment>
<sequence length="936" mass="106169">MEMPMPPDDQELRNVIDKLAQFVARNGPEFEKMTMEKQKDNPKFSFLFGGEFYSYYKCKLALEQQQLICKQQAPELEPTSAMPPLPQPPLAPTASLTPAQGTPSMDELIQQSQWSLQQQEQHLLALRQEQVTTAVAHAVEQQMQKLLEETQLDMSEFDNLLQPIIDTCTKDAISAGKNWMFSNAKSPPHCELMAGHLRNRITADGAHFELRLHLIYLINDVLHHCQRKQARELLAALQKVVVPIYCTSFLAVEEDKQQKIARLLQLWEKNGYFDDSIIQQLQSPALGLGQYQATLINEYSSVVQPVQLAFQQQIQSLKTQHEEFVSSLAQQQQQQQQQQQQQPQPQPQPQIQLPQMEADVKATPPPPAPPPASAPAPTIPPTTQPDDNKPPIQMPGSSEYDTSAGVQDPAAAGPRGPGPHEQIPPNKPPWFDQPHPVAPWGQQQPPEQPPYPHHQGGPPHCPPWNNSHEGMWGEQRGDPGWNGQRDAPWNNQPDPNWNNQFEGPWNNQHEPPPWGGAQREPPFRMQRPPHFRGPFPPHQQHPQFNQPPHPHNFNRFPPRFMQDDFPPRHPFERPPYPHRFDYPQGDFPADMGPPHHHPGHRMPHPGINEHPPWAGPQHPDFGPPPHGFNGQPPHMRRQGPPHINHDDPSLVPNVPYFDLPAGLMAPLVKLEDHEYKPLDPKDIRLPPPMPPSERLLAAVEAFYSPPSHDRPRNSEGWEQNGLYEFFRAKMRARRRKGQEKRNSGPSRSRSRSKSRGRSSSRSSSRSSKSSRSSSRSHSRSRSRSSSRSRSRSRSRSRSSRSRSRSRSRSRSKSYSPGRRRRSRSRSPTPPSAAGLGSNSAPPIPDSRLGEENKGHQMLVKMGWSGSGGLGAKEQGIQDPIKGGDVRDKWDQYKGVGVALDDPYENYRRNKSYSFIARMKARDEFSTFGTRKEEKED</sequence>
<gene>
    <name evidence="8" type="primary">Cherp</name>
    <name evidence="7" type="synonym">Scaf6</name>
</gene>
<keyword id="KW-0007">Acetylation</keyword>
<keyword id="KW-0963">Cytoplasm</keyword>
<keyword id="KW-0256">Endoplasmic reticulum</keyword>
<keyword id="KW-1017">Isopeptide bond</keyword>
<keyword id="KW-0597">Phosphoprotein</keyword>
<keyword id="KW-1185">Reference proteome</keyword>
<keyword id="KW-0832">Ubl conjugation</keyword>
<proteinExistence type="evidence at protein level"/>
<evidence type="ECO:0000250" key="1">
    <source>
        <dbReference type="UniProtKB" id="Q8IWX8"/>
    </source>
</evidence>
<evidence type="ECO:0000255" key="2"/>
<evidence type="ECO:0000255" key="3">
    <source>
        <dbReference type="PROSITE-ProRule" id="PRU00092"/>
    </source>
</evidence>
<evidence type="ECO:0000255" key="4">
    <source>
        <dbReference type="PROSITE-ProRule" id="PRU00724"/>
    </source>
</evidence>
<evidence type="ECO:0000256" key="5">
    <source>
        <dbReference type="SAM" id="MobiDB-lite"/>
    </source>
</evidence>
<evidence type="ECO:0000305" key="6"/>
<evidence type="ECO:0000312" key="7">
    <source>
        <dbReference type="EMBL" id="AAN77182.1"/>
    </source>
</evidence>
<evidence type="ECO:0000312" key="8">
    <source>
        <dbReference type="MGI" id="MGI:106417"/>
    </source>
</evidence>
<evidence type="ECO:0007744" key="9">
    <source>
    </source>
</evidence>
<evidence type="ECO:0007744" key="10">
    <source>
    </source>
</evidence>
<evidence type="ECO:0007744" key="11">
    <source>
    </source>
</evidence>
<accession>Q8CGZ0</accession>
<accession>Q8K291</accession>
<accession>Q8VCD2</accession>
<reference evidence="6 7" key="1">
    <citation type="submission" date="2002-08" db="EMBL/GenBank/DDBJ databases">
        <title>Functional characterization of the novel SR-related CTD associated factor, SCAF6.</title>
        <authorList>
            <person name="Sampson N.D."/>
            <person name="Hewitt J.E."/>
        </authorList>
    </citation>
    <scope>NUCLEOTIDE SEQUENCE [MRNA]</scope>
</reference>
<reference evidence="6" key="2">
    <citation type="journal article" date="2004" name="Genome Res.">
        <title>The status, quality, and expansion of the NIH full-length cDNA project: the Mammalian Gene Collection (MGC).</title>
        <authorList>
            <consortium name="The MGC Project Team"/>
        </authorList>
    </citation>
    <scope>NUCLEOTIDE SEQUENCE [LARGE SCALE MRNA]</scope>
    <source>
        <strain>FVB/N</strain>
        <tissue>Colon</tissue>
    </source>
</reference>
<reference key="3">
    <citation type="journal article" date="2007" name="J. Immunol.">
        <title>Quantitative time-resolved phosphoproteomic analysis of mast cell signaling.</title>
        <authorList>
            <person name="Cao L."/>
            <person name="Yu K."/>
            <person name="Banh C."/>
            <person name="Nguyen V."/>
            <person name="Ritz A."/>
            <person name="Raphael B.J."/>
            <person name="Kawakami Y."/>
            <person name="Kawakami T."/>
            <person name="Salomon A.R."/>
        </authorList>
    </citation>
    <scope>PHOSPHORYLATION [LARGE SCALE ANALYSIS] AT TYR-723</scope>
    <scope>IDENTIFICATION BY MASS SPECTROMETRY [LARGE SCALE ANALYSIS]</scope>
    <source>
        <tissue>Mast cell</tissue>
    </source>
</reference>
<reference key="4">
    <citation type="journal article" date="2007" name="Proc. Natl. Acad. Sci. U.S.A.">
        <title>Large-scale phosphorylation analysis of mouse liver.</title>
        <authorList>
            <person name="Villen J."/>
            <person name="Beausoleil S.A."/>
            <person name="Gerber S.A."/>
            <person name="Gygi S.P."/>
        </authorList>
    </citation>
    <scope>IDENTIFICATION BY MASS SPECTROMETRY [LARGE SCALE ANALYSIS]</scope>
    <source>
        <tissue>Liver</tissue>
    </source>
</reference>
<reference key="5">
    <citation type="journal article" date="2009" name="Immunity">
        <title>The phagosomal proteome in interferon-gamma-activated macrophages.</title>
        <authorList>
            <person name="Trost M."/>
            <person name="English L."/>
            <person name="Lemieux S."/>
            <person name="Courcelles M."/>
            <person name="Desjardins M."/>
            <person name="Thibault P."/>
        </authorList>
    </citation>
    <scope>PHOSPHORYLATION [LARGE SCALE ANALYSIS] AT SER-824; SER-826 AND THR-828</scope>
    <scope>IDENTIFICATION BY MASS SPECTROMETRY [LARGE SCALE ANALYSIS]</scope>
</reference>
<reference key="6">
    <citation type="journal article" date="2010" name="Cell">
        <title>A tissue-specific atlas of mouse protein phosphorylation and expression.</title>
        <authorList>
            <person name="Huttlin E.L."/>
            <person name="Jedrychowski M.P."/>
            <person name="Elias J.E."/>
            <person name="Goswami T."/>
            <person name="Rad R."/>
            <person name="Beausoleil S.A."/>
            <person name="Villen J."/>
            <person name="Haas W."/>
            <person name="Sowa M.E."/>
            <person name="Gygi S.P."/>
        </authorList>
    </citation>
    <scope>PHOSPHORYLATION [LARGE SCALE ANALYSIS] AT SER-822; SER-824; SER-826 AND THR-828</scope>
    <scope>IDENTIFICATION BY MASS SPECTROMETRY [LARGE SCALE ANALYSIS]</scope>
    <source>
        <tissue>Brain</tissue>
        <tissue>Brown adipose tissue</tissue>
        <tissue>Kidney</tissue>
        <tissue>Liver</tissue>
        <tissue>Lung</tissue>
        <tissue>Pancreas</tissue>
        <tissue>Spleen</tissue>
        <tissue>Testis</tissue>
    </source>
</reference>
<feature type="chain" id="PRO_0000299493" description="Calcium homeostasis endoplasmic reticulum protein">
    <location>
        <begin position="1"/>
        <end position="936"/>
    </location>
</feature>
<feature type="repeat" description="SURP motif" evidence="2">
    <location>
        <begin position="15"/>
        <end position="57"/>
    </location>
</feature>
<feature type="domain" description="CID" evidence="4">
    <location>
        <begin position="149"/>
        <end position="289"/>
    </location>
</feature>
<feature type="domain" description="G-patch" evidence="3">
    <location>
        <begin position="850"/>
        <end position="900"/>
    </location>
</feature>
<feature type="region of interest" description="Disordered" evidence="5">
    <location>
        <begin position="77"/>
        <end position="102"/>
    </location>
</feature>
<feature type="region of interest" description="Disordered" evidence="5">
    <location>
        <begin position="328"/>
        <end position="646"/>
    </location>
</feature>
<feature type="region of interest" description="Disordered" evidence="5">
    <location>
        <begin position="731"/>
        <end position="887"/>
    </location>
</feature>
<feature type="compositionally biased region" description="Pro residues" evidence="5">
    <location>
        <begin position="81"/>
        <end position="91"/>
    </location>
</feature>
<feature type="compositionally biased region" description="Low complexity" evidence="5">
    <location>
        <begin position="330"/>
        <end position="355"/>
    </location>
</feature>
<feature type="compositionally biased region" description="Pro residues" evidence="5">
    <location>
        <begin position="363"/>
        <end position="383"/>
    </location>
</feature>
<feature type="compositionally biased region" description="Polar residues" evidence="5">
    <location>
        <begin position="395"/>
        <end position="405"/>
    </location>
</feature>
<feature type="compositionally biased region" description="Low complexity" evidence="5">
    <location>
        <begin position="488"/>
        <end position="500"/>
    </location>
</feature>
<feature type="compositionally biased region" description="Pro residues" evidence="5">
    <location>
        <begin position="534"/>
        <end position="550"/>
    </location>
</feature>
<feature type="compositionally biased region" description="Low complexity" evidence="5">
    <location>
        <begin position="551"/>
        <end position="560"/>
    </location>
</feature>
<feature type="compositionally biased region" description="Basic and acidic residues" evidence="5">
    <location>
        <begin position="561"/>
        <end position="572"/>
    </location>
</feature>
<feature type="compositionally biased region" description="Basic residues" evidence="5">
    <location>
        <begin position="594"/>
        <end position="603"/>
    </location>
</feature>
<feature type="compositionally biased region" description="Basic residues" evidence="5">
    <location>
        <begin position="748"/>
        <end position="758"/>
    </location>
</feature>
<feature type="compositionally biased region" description="Low complexity" evidence="5">
    <location>
        <begin position="759"/>
        <end position="773"/>
    </location>
</feature>
<feature type="compositionally biased region" description="Basic residues" evidence="5">
    <location>
        <begin position="774"/>
        <end position="824"/>
    </location>
</feature>
<feature type="modified residue" description="N-acetylmethionine" evidence="1">
    <location>
        <position position="1"/>
    </location>
</feature>
<feature type="modified residue" description="N6-acetyllysine" evidence="1">
    <location>
        <position position="18"/>
    </location>
</feature>
<feature type="modified residue" description="Phosphotyrosine" evidence="9">
    <location>
        <position position="723"/>
    </location>
</feature>
<feature type="modified residue" description="Phosphoserine" evidence="11">
    <location>
        <position position="822"/>
    </location>
</feature>
<feature type="modified residue" description="Phosphoserine" evidence="10 11">
    <location>
        <position position="824"/>
    </location>
</feature>
<feature type="modified residue" description="Phosphoserine" evidence="10 11">
    <location>
        <position position="826"/>
    </location>
</feature>
<feature type="modified residue" description="Phosphothreonine" evidence="10 11">
    <location>
        <position position="828"/>
    </location>
</feature>
<feature type="modified residue" description="Phosphoserine" evidence="1">
    <location>
        <position position="837"/>
    </location>
</feature>
<feature type="modified residue" description="Phosphoserine" evidence="1">
    <location>
        <position position="864"/>
    </location>
</feature>
<feature type="modified residue" description="Phosphoserine" evidence="1">
    <location>
        <position position="866"/>
    </location>
</feature>
<feature type="modified residue" description="N6-acetyllysine" evidence="1">
    <location>
        <position position="888"/>
    </location>
</feature>
<feature type="modified residue" description="Phosphoserine" evidence="1">
    <location>
        <position position="913"/>
    </location>
</feature>
<feature type="cross-link" description="Glycyl lysine isopeptide (Lys-Gly) (interchain with G-Cter in SUMO2)" evidence="1">
    <location>
        <position position="853"/>
    </location>
</feature>
<feature type="cross-link" description="Glycyl lysine isopeptide (Lys-Gly) (interchain with G-Cter in SUMO2)" evidence="1">
    <location>
        <position position="881"/>
    </location>
</feature>
<feature type="sequence conflict" description="In Ref. 2; BC020488." evidence="6" ref="2">
    <location>
        <begin position="348"/>
        <end position="349"/>
    </location>
</feature>
<protein>
    <recommendedName>
        <fullName>Calcium homeostasis endoplasmic reticulum protein</fullName>
    </recommendedName>
    <alternativeName>
        <fullName>SR-related CTD-associated factor 6</fullName>
    </alternativeName>
</protein>
<dbReference type="EMBL" id="AF536541">
    <property type="protein sequence ID" value="AAN77182.1"/>
    <property type="molecule type" value="mRNA"/>
</dbReference>
<dbReference type="EMBL" id="BC020488">
    <property type="status" value="NOT_ANNOTATED_CDS"/>
    <property type="molecule type" value="mRNA"/>
</dbReference>
<dbReference type="RefSeq" id="NP_613051.3">
    <property type="nucleotide sequence ID" value="NM_138585.3"/>
</dbReference>
<dbReference type="SMR" id="Q8CGZ0"/>
<dbReference type="BioGRID" id="205695">
    <property type="interactions" value="4"/>
</dbReference>
<dbReference type="FunCoup" id="Q8CGZ0">
    <property type="interactions" value="3282"/>
</dbReference>
<dbReference type="IntAct" id="Q8CGZ0">
    <property type="interactions" value="3"/>
</dbReference>
<dbReference type="MINT" id="Q8CGZ0"/>
<dbReference type="STRING" id="10090.ENSMUSP00000148273"/>
<dbReference type="GlyGen" id="Q8CGZ0">
    <property type="glycosylation" value="2 sites"/>
</dbReference>
<dbReference type="iPTMnet" id="Q8CGZ0"/>
<dbReference type="PhosphoSitePlus" id="Q8CGZ0"/>
<dbReference type="jPOST" id="Q8CGZ0"/>
<dbReference type="PaxDb" id="10090-ENSMUSP00000078469"/>
<dbReference type="ProteomicsDB" id="281612"/>
<dbReference type="Pumba" id="Q8CGZ0"/>
<dbReference type="DNASU" id="27967"/>
<dbReference type="GeneID" id="27967"/>
<dbReference type="KEGG" id="mmu:27967"/>
<dbReference type="UCSC" id="uc009mgb.1">
    <property type="organism name" value="mouse"/>
</dbReference>
<dbReference type="AGR" id="MGI:106417"/>
<dbReference type="CTD" id="10523"/>
<dbReference type="MGI" id="MGI:106417">
    <property type="gene designation" value="Cherp"/>
</dbReference>
<dbReference type="eggNOG" id="KOG4368">
    <property type="taxonomic scope" value="Eukaryota"/>
</dbReference>
<dbReference type="InParanoid" id="Q8CGZ0"/>
<dbReference type="PhylomeDB" id="Q8CGZ0"/>
<dbReference type="Reactome" id="R-MMU-72163">
    <property type="pathway name" value="mRNA Splicing - Major Pathway"/>
</dbReference>
<dbReference type="BioGRID-ORCS" id="27967">
    <property type="hits" value="22 hits in 77 CRISPR screens"/>
</dbReference>
<dbReference type="ChiTaRS" id="Cherp">
    <property type="organism name" value="mouse"/>
</dbReference>
<dbReference type="PRO" id="PR:Q8CGZ0"/>
<dbReference type="Proteomes" id="UP000000589">
    <property type="component" value="Unplaced"/>
</dbReference>
<dbReference type="RNAct" id="Q8CGZ0">
    <property type="molecule type" value="protein"/>
</dbReference>
<dbReference type="GO" id="GO:0005737">
    <property type="term" value="C:cytoplasm"/>
    <property type="evidence" value="ECO:0000266"/>
    <property type="project" value="MGI"/>
</dbReference>
<dbReference type="GO" id="GO:0005783">
    <property type="term" value="C:endoplasmic reticulum"/>
    <property type="evidence" value="ECO:0007669"/>
    <property type="project" value="UniProtKB-SubCell"/>
</dbReference>
<dbReference type="GO" id="GO:0048471">
    <property type="term" value="C:perinuclear region of cytoplasm"/>
    <property type="evidence" value="ECO:0007669"/>
    <property type="project" value="UniProtKB-SubCell"/>
</dbReference>
<dbReference type="GO" id="GO:0003723">
    <property type="term" value="F:RNA binding"/>
    <property type="evidence" value="ECO:0007669"/>
    <property type="project" value="InterPro"/>
</dbReference>
<dbReference type="GO" id="GO:0006874">
    <property type="term" value="P:intracellular calcium ion homeostasis"/>
    <property type="evidence" value="ECO:0000266"/>
    <property type="project" value="MGI"/>
</dbReference>
<dbReference type="GO" id="GO:0008285">
    <property type="term" value="P:negative regulation of cell population proliferation"/>
    <property type="evidence" value="ECO:0000266"/>
    <property type="project" value="MGI"/>
</dbReference>
<dbReference type="GO" id="GO:0006396">
    <property type="term" value="P:RNA processing"/>
    <property type="evidence" value="ECO:0007669"/>
    <property type="project" value="InterPro"/>
</dbReference>
<dbReference type="FunFam" id="1.10.10.790:FF:000007">
    <property type="entry name" value="Calcium homeostasis endoplasmic reticulum protein"/>
    <property type="match status" value="1"/>
</dbReference>
<dbReference type="FunFam" id="1.25.40.90:FF:000024">
    <property type="entry name" value="Calcium homeostasis endoplasmic reticulum protein"/>
    <property type="match status" value="1"/>
</dbReference>
<dbReference type="Gene3D" id="1.25.40.90">
    <property type="match status" value="1"/>
</dbReference>
<dbReference type="Gene3D" id="1.10.10.790">
    <property type="entry name" value="Surp module"/>
    <property type="match status" value="1"/>
</dbReference>
<dbReference type="InterPro" id="IPR006569">
    <property type="entry name" value="CID_dom"/>
</dbReference>
<dbReference type="InterPro" id="IPR056721">
    <property type="entry name" value="DUF7819"/>
</dbReference>
<dbReference type="InterPro" id="IPR008942">
    <property type="entry name" value="ENTH_VHS"/>
</dbReference>
<dbReference type="InterPro" id="IPR000467">
    <property type="entry name" value="G_patch_dom"/>
</dbReference>
<dbReference type="InterPro" id="IPR000061">
    <property type="entry name" value="Surp"/>
</dbReference>
<dbReference type="InterPro" id="IPR035967">
    <property type="entry name" value="SWAP/Surp_sf"/>
</dbReference>
<dbReference type="PANTHER" id="PTHR12323:SF0">
    <property type="entry name" value="CALCIUM HOMEOSTASIS ENDOPLASMIC RETICULUM PROTEIN"/>
    <property type="match status" value="1"/>
</dbReference>
<dbReference type="PANTHER" id="PTHR12323">
    <property type="entry name" value="SR-RELATED CTD ASSOCIATED FACTOR 6"/>
    <property type="match status" value="1"/>
</dbReference>
<dbReference type="Pfam" id="PF04818">
    <property type="entry name" value="CID"/>
    <property type="match status" value="1"/>
</dbReference>
<dbReference type="Pfam" id="PF25127">
    <property type="entry name" value="DUF7819"/>
    <property type="match status" value="1"/>
</dbReference>
<dbReference type="Pfam" id="PF01585">
    <property type="entry name" value="G-patch"/>
    <property type="match status" value="1"/>
</dbReference>
<dbReference type="Pfam" id="PF01805">
    <property type="entry name" value="Surp"/>
    <property type="match status" value="1"/>
</dbReference>
<dbReference type="SMART" id="SM00443">
    <property type="entry name" value="G_patch"/>
    <property type="match status" value="1"/>
</dbReference>
<dbReference type="SMART" id="SM00648">
    <property type="entry name" value="SWAP"/>
    <property type="match status" value="1"/>
</dbReference>
<dbReference type="SUPFAM" id="SSF48464">
    <property type="entry name" value="ENTH/VHS domain"/>
    <property type="match status" value="1"/>
</dbReference>
<dbReference type="SUPFAM" id="SSF109905">
    <property type="entry name" value="Surp module (SWAP domain)"/>
    <property type="match status" value="1"/>
</dbReference>
<dbReference type="PROSITE" id="PS51391">
    <property type="entry name" value="CID"/>
    <property type="match status" value="1"/>
</dbReference>
<dbReference type="PROSITE" id="PS50174">
    <property type="entry name" value="G_PATCH"/>
    <property type="match status" value="1"/>
</dbReference>
<dbReference type="PROSITE" id="PS50128">
    <property type="entry name" value="SURP"/>
    <property type="match status" value="1"/>
</dbReference>
<name>CHERP_MOUSE</name>